<proteinExistence type="inferred from homology"/>
<dbReference type="EC" id="4.1.1.85" evidence="1"/>
<dbReference type="EMBL" id="CP000886">
    <property type="protein sequence ID" value="ABX70789.1"/>
    <property type="molecule type" value="Genomic_DNA"/>
</dbReference>
<dbReference type="RefSeq" id="WP_000056761.1">
    <property type="nucleotide sequence ID" value="NC_010102.1"/>
</dbReference>
<dbReference type="SMR" id="A9N512"/>
<dbReference type="KEGG" id="spq:SPAB_05520"/>
<dbReference type="PATRIC" id="fig|1016998.12.peg.5173"/>
<dbReference type="HOGENOM" id="CLU_081825_0_0_6"/>
<dbReference type="BioCyc" id="SENT1016998:SPAB_RS22540-MONOMER"/>
<dbReference type="UniPathway" id="UPA00263">
    <property type="reaction ID" value="UER00378"/>
</dbReference>
<dbReference type="Proteomes" id="UP000008556">
    <property type="component" value="Chromosome"/>
</dbReference>
<dbReference type="GO" id="GO:0033982">
    <property type="term" value="F:3-dehydro-L-gulonate-6-phosphate decarboxylase activity"/>
    <property type="evidence" value="ECO:0007669"/>
    <property type="project" value="UniProtKB-EC"/>
</dbReference>
<dbReference type="GO" id="GO:0000287">
    <property type="term" value="F:magnesium ion binding"/>
    <property type="evidence" value="ECO:0007669"/>
    <property type="project" value="UniProtKB-UniRule"/>
</dbReference>
<dbReference type="GO" id="GO:0004590">
    <property type="term" value="F:orotidine-5'-phosphate decarboxylase activity"/>
    <property type="evidence" value="ECO:0007669"/>
    <property type="project" value="InterPro"/>
</dbReference>
<dbReference type="GO" id="GO:0006207">
    <property type="term" value="P:'de novo' pyrimidine nucleobase biosynthetic process"/>
    <property type="evidence" value="ECO:0007669"/>
    <property type="project" value="InterPro"/>
</dbReference>
<dbReference type="GO" id="GO:0019854">
    <property type="term" value="P:L-ascorbic acid catabolic process"/>
    <property type="evidence" value="ECO:0007669"/>
    <property type="project" value="UniProtKB-UniRule"/>
</dbReference>
<dbReference type="CDD" id="cd04726">
    <property type="entry name" value="KGPDC_HPS"/>
    <property type="match status" value="1"/>
</dbReference>
<dbReference type="FunFam" id="3.20.20.70:FF:000022">
    <property type="entry name" value="3-keto-L-gulonate-6-phosphate decarboxylase UlaD"/>
    <property type="match status" value="1"/>
</dbReference>
<dbReference type="Gene3D" id="3.20.20.70">
    <property type="entry name" value="Aldolase class I"/>
    <property type="match status" value="1"/>
</dbReference>
<dbReference type="HAMAP" id="MF_01267">
    <property type="entry name" value="UlaD"/>
    <property type="match status" value="1"/>
</dbReference>
<dbReference type="InterPro" id="IPR023942">
    <property type="entry name" value="3-keto-L-gulonate6Pdecase_UlaD"/>
</dbReference>
<dbReference type="InterPro" id="IPR013785">
    <property type="entry name" value="Aldolase_TIM"/>
</dbReference>
<dbReference type="InterPro" id="IPR041710">
    <property type="entry name" value="HPS/KGPDC"/>
</dbReference>
<dbReference type="InterPro" id="IPR001754">
    <property type="entry name" value="OMPdeCOase_dom"/>
</dbReference>
<dbReference type="InterPro" id="IPR011060">
    <property type="entry name" value="RibuloseP-bd_barrel"/>
</dbReference>
<dbReference type="NCBIfam" id="NF009832">
    <property type="entry name" value="PRK13306.1"/>
    <property type="match status" value="1"/>
</dbReference>
<dbReference type="PANTHER" id="PTHR35039">
    <property type="entry name" value="3-KETO-L-GULONATE-6-PHOSPHATE DECARBOXYLASE SGBH-RELATED"/>
    <property type="match status" value="1"/>
</dbReference>
<dbReference type="PANTHER" id="PTHR35039:SF3">
    <property type="entry name" value="3-KETO-L-GULONATE-6-PHOSPHATE DECARBOXYLASE SGBH-RELATED"/>
    <property type="match status" value="1"/>
</dbReference>
<dbReference type="Pfam" id="PF00215">
    <property type="entry name" value="OMPdecase"/>
    <property type="match status" value="1"/>
</dbReference>
<dbReference type="SMART" id="SM00934">
    <property type="entry name" value="OMPdecase"/>
    <property type="match status" value="1"/>
</dbReference>
<dbReference type="SUPFAM" id="SSF51366">
    <property type="entry name" value="Ribulose-phoshate binding barrel"/>
    <property type="match status" value="1"/>
</dbReference>
<name>ULAD_SALPB</name>
<reference key="1">
    <citation type="submission" date="2007-11" db="EMBL/GenBank/DDBJ databases">
        <authorList>
            <consortium name="The Salmonella enterica serovar Paratyphi B Genome Sequencing Project"/>
            <person name="McClelland M."/>
            <person name="Sanderson E.K."/>
            <person name="Porwollik S."/>
            <person name="Spieth J."/>
            <person name="Clifton W.S."/>
            <person name="Fulton R."/>
            <person name="Cordes M."/>
            <person name="Wollam A."/>
            <person name="Shah N."/>
            <person name="Pepin K."/>
            <person name="Bhonagiri V."/>
            <person name="Nash W."/>
            <person name="Johnson M."/>
            <person name="Thiruvilangam P."/>
            <person name="Wilson R."/>
        </authorList>
    </citation>
    <scope>NUCLEOTIDE SEQUENCE [LARGE SCALE GENOMIC DNA]</scope>
    <source>
        <strain>ATCC BAA-1250 / SPB7</strain>
    </source>
</reference>
<protein>
    <recommendedName>
        <fullName evidence="1">3-keto-L-gulonate-6-phosphate decarboxylase UlaD</fullName>
        <ecNumber evidence="1">4.1.1.85</ecNumber>
    </recommendedName>
    <alternativeName>
        <fullName evidence="1">3-dehydro-L-gulonate-6-phosphate decarboxylase</fullName>
    </alternativeName>
    <alternativeName>
        <fullName evidence="1">KGPDC</fullName>
    </alternativeName>
    <alternativeName>
        <fullName evidence="1">L-ascorbate utilization protein D</fullName>
    </alternativeName>
</protein>
<gene>
    <name evidence="1" type="primary">ulaD</name>
    <name type="ordered locus">SPAB_05520</name>
</gene>
<accession>A9N512</accession>
<comment type="function">
    <text evidence="1">Catalyzes the decarboxylation of 3-keto-L-gulonate-6-P into L-xylulose-5-P. Is involved in the anaerobic L-ascorbate utilization.</text>
</comment>
<comment type="catalytic activity">
    <reaction evidence="1">
        <text>3-dehydro-L-gulonate 6-phosphate + H(+) = L-xylulose 5-phosphate + CO2</text>
        <dbReference type="Rhea" id="RHEA:14353"/>
        <dbReference type="ChEBI" id="CHEBI:15378"/>
        <dbReference type="ChEBI" id="CHEBI:16526"/>
        <dbReference type="ChEBI" id="CHEBI:57829"/>
        <dbReference type="ChEBI" id="CHEBI:58774"/>
        <dbReference type="EC" id="4.1.1.85"/>
    </reaction>
</comment>
<comment type="cofactor">
    <cofactor evidence="1">
        <name>Mg(2+)</name>
        <dbReference type="ChEBI" id="CHEBI:18420"/>
    </cofactor>
    <text evidence="1">Binds 1 Mg(2+) ion per subunit.</text>
</comment>
<comment type="pathway">
    <text evidence="1">Cofactor degradation; L-ascorbate degradation; D-xylulose 5-phosphate from L-ascorbate: step 2/4.</text>
</comment>
<comment type="subunit">
    <text evidence="1">Homodimer.</text>
</comment>
<comment type="induction">
    <text evidence="1">Induced by L-ascorbate. Repressed by UlaR.</text>
</comment>
<comment type="similarity">
    <text evidence="1">Belongs to the HPS/KGPDC family. KGPDC subfamily.</text>
</comment>
<keyword id="KW-0119">Carbohydrate metabolism</keyword>
<keyword id="KW-0210">Decarboxylase</keyword>
<keyword id="KW-0456">Lyase</keyword>
<keyword id="KW-0460">Magnesium</keyword>
<keyword id="KW-0479">Metal-binding</keyword>
<evidence type="ECO:0000255" key="1">
    <source>
        <dbReference type="HAMAP-Rule" id="MF_01267"/>
    </source>
</evidence>
<organism>
    <name type="scientific">Salmonella paratyphi B (strain ATCC BAA-1250 / SPB7)</name>
    <dbReference type="NCBI Taxonomy" id="1016998"/>
    <lineage>
        <taxon>Bacteria</taxon>
        <taxon>Pseudomonadati</taxon>
        <taxon>Pseudomonadota</taxon>
        <taxon>Gammaproteobacteria</taxon>
        <taxon>Enterobacterales</taxon>
        <taxon>Enterobacteriaceae</taxon>
        <taxon>Salmonella</taxon>
    </lineage>
</organism>
<feature type="chain" id="PRO_1000085827" description="3-keto-L-gulonate-6-phosphate decarboxylase UlaD">
    <location>
        <begin position="1"/>
        <end position="216"/>
    </location>
</feature>
<feature type="binding site" evidence="1">
    <location>
        <position position="11"/>
    </location>
    <ligand>
        <name>substrate</name>
    </ligand>
</feature>
<feature type="binding site" evidence="1">
    <location>
        <position position="33"/>
    </location>
    <ligand>
        <name>Mg(2+)</name>
        <dbReference type="ChEBI" id="CHEBI:18420"/>
    </ligand>
</feature>
<feature type="binding site" evidence="1">
    <location>
        <position position="62"/>
    </location>
    <ligand>
        <name>Mg(2+)</name>
        <dbReference type="ChEBI" id="CHEBI:18420"/>
    </ligand>
</feature>
<feature type="binding site" evidence="1">
    <location>
        <position position="192"/>
    </location>
    <ligand>
        <name>substrate</name>
    </ligand>
</feature>
<feature type="site" description="Transition state stabilizer" evidence="1">
    <location>
        <position position="64"/>
    </location>
</feature>
<feature type="site" description="Transition state stabilizer" evidence="1">
    <location>
        <position position="67"/>
    </location>
</feature>
<sequence>MSLPMLQVALDNQTMDSAYETTRLIAEEVDIIEVGTILCVGEGVRAVRDLKALYPHKIVLADAKIADAGKILSRMCFEANADWVTVICCADINTAKGALDVAKEFNGDVQIELTGYWTWEQAQQWRDAGIQQVVYHRSRDAQAAGVAWGEADITAIKRLSDMGFKVTVTGGLALEDLPLFKGIPIHVFIAGRSIRDAESPVEAARQFKRSIAQLWG</sequence>